<dbReference type="EC" id="3.1.-.-"/>
<dbReference type="EMBL" id="L77117">
    <property type="protein sequence ID" value="AAB99106.1"/>
    <property type="molecule type" value="Genomic_DNA"/>
</dbReference>
<dbReference type="PIR" id="F64437">
    <property type="entry name" value="F64437"/>
</dbReference>
<dbReference type="RefSeq" id="WP_010870615.1">
    <property type="nucleotide sequence ID" value="NC_000909.1"/>
</dbReference>
<dbReference type="PDB" id="3BPQ">
    <property type="method" value="X-ray"/>
    <property type="resolution" value="2.20 A"/>
    <property type="chains" value="B/D=1-88"/>
</dbReference>
<dbReference type="PDBsum" id="3BPQ"/>
<dbReference type="SMR" id="Q58503"/>
<dbReference type="STRING" id="243232.MJ_1103"/>
<dbReference type="PaxDb" id="243232-MJ_1103"/>
<dbReference type="EnsemblBacteria" id="AAB99106">
    <property type="protein sequence ID" value="AAB99106"/>
    <property type="gene ID" value="MJ_1103"/>
</dbReference>
<dbReference type="GeneID" id="1452000"/>
<dbReference type="KEGG" id="mja:MJ_1103"/>
<dbReference type="eggNOG" id="arCOG01665">
    <property type="taxonomic scope" value="Archaea"/>
</dbReference>
<dbReference type="HOGENOM" id="CLU_155761_5_1_2"/>
<dbReference type="InParanoid" id="Q58503"/>
<dbReference type="OrthoDB" id="97626at2157"/>
<dbReference type="EvolutionaryTrace" id="Q58503"/>
<dbReference type="Proteomes" id="UP000000805">
    <property type="component" value="Chromosome"/>
</dbReference>
<dbReference type="GO" id="GO:0004518">
    <property type="term" value="F:nuclease activity"/>
    <property type="evidence" value="ECO:0007669"/>
    <property type="project" value="UniProtKB-KW"/>
</dbReference>
<dbReference type="Gene3D" id="3.30.2310.20">
    <property type="entry name" value="RelE-like"/>
    <property type="match status" value="1"/>
</dbReference>
<dbReference type="InterPro" id="IPR007712">
    <property type="entry name" value="RelE/ParE_toxin"/>
</dbReference>
<dbReference type="InterPro" id="IPR035093">
    <property type="entry name" value="RelE/ParE_toxin_dom_sf"/>
</dbReference>
<dbReference type="InterPro" id="IPR052747">
    <property type="entry name" value="TA_system_RelE_toxin"/>
</dbReference>
<dbReference type="PANTHER" id="PTHR38813">
    <property type="match status" value="1"/>
</dbReference>
<dbReference type="PANTHER" id="PTHR38813:SF1">
    <property type="entry name" value="TOXIN RELE1-RELATED"/>
    <property type="match status" value="1"/>
</dbReference>
<dbReference type="Pfam" id="PF05016">
    <property type="entry name" value="ParE_toxin"/>
    <property type="match status" value="1"/>
</dbReference>
<dbReference type="SUPFAM" id="SSF143011">
    <property type="entry name" value="RelE-like"/>
    <property type="match status" value="1"/>
</dbReference>
<evidence type="ECO:0000250" key="1"/>
<evidence type="ECO:0000269" key="2">
    <source>
    </source>
</evidence>
<evidence type="ECO:0000305" key="3"/>
<evidence type="ECO:0007829" key="4">
    <source>
        <dbReference type="PDB" id="3BPQ"/>
    </source>
</evidence>
<name>RELE3_METJA</name>
<protein>
    <recommendedName>
        <fullName>Toxin RelE3</fullName>
        <ecNumber>3.1.-.-</ecNumber>
    </recommendedName>
    <alternativeName>
        <fullName>MjRelE</fullName>
    </alternativeName>
    <alternativeName>
        <fullName>Putative endoribonuclease RelE</fullName>
    </alternativeName>
</protein>
<feature type="chain" id="PRO_0000107168" description="Toxin RelE3">
    <location>
        <begin position="1"/>
        <end position="88"/>
    </location>
</feature>
<feature type="mutagenesis site" description="Inactivates toxin." evidence="2">
    <original>R</original>
    <variation>K</variation>
    <variation>S</variation>
    <location>
        <position position="62"/>
    </location>
</feature>
<feature type="strand" evidence="4">
    <location>
        <begin position="4"/>
        <end position="6"/>
    </location>
</feature>
<feature type="helix" evidence="4">
    <location>
        <begin position="7"/>
        <end position="13"/>
    </location>
</feature>
<feature type="helix" evidence="4">
    <location>
        <begin position="18"/>
        <end position="34"/>
    </location>
</feature>
<feature type="strand" evidence="4">
    <location>
        <begin position="44"/>
        <end position="46"/>
    </location>
</feature>
<feature type="strand" evidence="4">
    <location>
        <begin position="50"/>
        <end position="58"/>
    </location>
</feature>
<feature type="strand" evidence="4">
    <location>
        <begin position="61"/>
        <end position="68"/>
    </location>
</feature>
<feature type="strand" evidence="4">
    <location>
        <begin position="71"/>
        <end position="79"/>
    </location>
</feature>
<feature type="helix" evidence="4">
    <location>
        <begin position="80"/>
        <end position="83"/>
    </location>
</feature>
<feature type="helix" evidence="4">
    <location>
        <begin position="84"/>
        <end position="86"/>
    </location>
</feature>
<gene>
    <name type="primary">relE3</name>
    <name type="synonym">relE</name>
    <name type="ordered locus">MJ1103</name>
</gene>
<keyword id="KW-0002">3D-structure</keyword>
<keyword id="KW-0378">Hydrolase</keyword>
<keyword id="KW-0540">Nuclease</keyword>
<keyword id="KW-1185">Reference proteome</keyword>
<keyword id="KW-1277">Toxin-antitoxin system</keyword>
<proteinExistence type="evidence at protein level"/>
<reference key="1">
    <citation type="journal article" date="1996" name="Science">
        <title>Complete genome sequence of the methanogenic archaeon, Methanococcus jannaschii.</title>
        <authorList>
            <person name="Bult C.J."/>
            <person name="White O."/>
            <person name="Olsen G.J."/>
            <person name="Zhou L."/>
            <person name="Fleischmann R.D."/>
            <person name="Sutton G.G."/>
            <person name="Blake J.A."/>
            <person name="FitzGerald L.M."/>
            <person name="Clayton R.A."/>
            <person name="Gocayne J.D."/>
            <person name="Kerlavage A.R."/>
            <person name="Dougherty B.A."/>
            <person name="Tomb J.-F."/>
            <person name="Adams M.D."/>
            <person name="Reich C.I."/>
            <person name="Overbeek R."/>
            <person name="Kirkness E.F."/>
            <person name="Weinstock K.G."/>
            <person name="Merrick J.M."/>
            <person name="Glodek A."/>
            <person name="Scott J.L."/>
            <person name="Geoghagen N.S.M."/>
            <person name="Weidman J.F."/>
            <person name="Fuhrmann J.L."/>
            <person name="Nguyen D."/>
            <person name="Utterback T.R."/>
            <person name="Kelley J.M."/>
            <person name="Peterson J.D."/>
            <person name="Sadow P.W."/>
            <person name="Hanna M.C."/>
            <person name="Cotton M.D."/>
            <person name="Roberts K.M."/>
            <person name="Hurst M.A."/>
            <person name="Kaine B.P."/>
            <person name="Borodovsky M."/>
            <person name="Klenk H.-P."/>
            <person name="Fraser C.M."/>
            <person name="Smith H.O."/>
            <person name="Woese C.R."/>
            <person name="Venter J.C."/>
        </authorList>
    </citation>
    <scope>NUCLEOTIDE SEQUENCE [LARGE SCALE GENOMIC DNA]</scope>
    <source>
        <strain>ATCC 43067 / DSM 2661 / JAL-1 / JCM 10045 / NBRC 100440</strain>
    </source>
</reference>
<reference key="2">
    <citation type="journal article" date="2005" name="Nucleic Acids Res.">
        <title>Toxin-antitoxin loci are highly abundant in free-living but lost from host-associated prokaryotes.</title>
        <authorList>
            <person name="Pandey D.P."/>
            <person name="Gerdes K."/>
        </authorList>
    </citation>
    <scope>POSSIBLE FUNCTION</scope>
    <source>
        <strain>ATCC 43067 / DSM 2661 / JAL-1 / JCM 10045 / NBRC 100440</strain>
    </source>
</reference>
<reference key="3">
    <citation type="journal article" date="2009" name="J. Mol. Biol.">
        <title>Crystal structure of the antitoxin-toxin protein complex RelB-RelE from Methanococcus jannaschii.</title>
        <authorList>
            <person name="Francuski D."/>
            <person name="Saenger W."/>
        </authorList>
    </citation>
    <scope>X-RAY CRYSTALLOGRAPHY (2.2 ANGSTROMS) IN COMPLEX WITH RELB</scope>
    <scope>SUBUNIT</scope>
    <scope>MUTAGENESIS OF ARG-62</scope>
    <source>
        <strain>ATCC 43067 / DSM 2661 / JAL-1 / JCM 10045 / NBRC 100440</strain>
    </source>
</reference>
<accession>Q58503</accession>
<sequence length="88" mass="10562">MKVLFAKTFVKDLKHVPGHIRKRIKLIIEECQNSNSLNDLKLDIKKIKGYHNYYRIRVGNYRIGIEVNGDTIIFRRVLHRKSIYDYFP</sequence>
<organism>
    <name type="scientific">Methanocaldococcus jannaschii (strain ATCC 43067 / DSM 2661 / JAL-1 / JCM 10045 / NBRC 100440)</name>
    <name type="common">Methanococcus jannaschii</name>
    <dbReference type="NCBI Taxonomy" id="243232"/>
    <lineage>
        <taxon>Archaea</taxon>
        <taxon>Methanobacteriati</taxon>
        <taxon>Methanobacteriota</taxon>
        <taxon>Methanomada group</taxon>
        <taxon>Methanococci</taxon>
        <taxon>Methanococcales</taxon>
        <taxon>Methanocaldococcaceae</taxon>
        <taxon>Methanocaldococcus</taxon>
    </lineage>
</organism>
<comment type="function">
    <text evidence="1">Toxic component of a type II toxin-antitoxin (TA) system. Has RNase activity (By similarity). Is very toxic upon expression in E.coli. Its toxic activity is probably neutralized by the cognate antitoxin RelB3.</text>
</comment>
<comment type="subunit">
    <text evidence="2">Forms heterodimers with RelB3 and possibly a heterotetramer RelE3-RelB3(2)-RelE3 from 2 heterodimers. The heterotetramer is probably not very stable in solution.</text>
</comment>
<comment type="similarity">
    <text evidence="3">Belongs to the RelE toxin family.</text>
</comment>